<organism>
    <name type="scientific">Francisella tularensis subsp. tularensis (strain FSC 198)</name>
    <dbReference type="NCBI Taxonomy" id="393115"/>
    <lineage>
        <taxon>Bacteria</taxon>
        <taxon>Pseudomonadati</taxon>
        <taxon>Pseudomonadota</taxon>
        <taxon>Gammaproteobacteria</taxon>
        <taxon>Thiotrichales</taxon>
        <taxon>Francisellaceae</taxon>
        <taxon>Francisella</taxon>
    </lineage>
</organism>
<dbReference type="EC" id="1.17.7.3" evidence="1"/>
<dbReference type="EMBL" id="AM286280">
    <property type="protein sequence ID" value="CAL08623.1"/>
    <property type="molecule type" value="Genomic_DNA"/>
</dbReference>
<dbReference type="SMR" id="Q14IL6"/>
<dbReference type="KEGG" id="ftf:FTF0607"/>
<dbReference type="HOGENOM" id="CLU_042258_1_0_6"/>
<dbReference type="UniPathway" id="UPA00056">
    <property type="reaction ID" value="UER00096"/>
</dbReference>
<dbReference type="GO" id="GO:0051539">
    <property type="term" value="F:4 iron, 4 sulfur cluster binding"/>
    <property type="evidence" value="ECO:0007669"/>
    <property type="project" value="UniProtKB-UniRule"/>
</dbReference>
<dbReference type="GO" id="GO:0046429">
    <property type="term" value="F:4-hydroxy-3-methylbut-2-en-1-yl diphosphate synthase activity (ferredoxin)"/>
    <property type="evidence" value="ECO:0007669"/>
    <property type="project" value="UniProtKB-UniRule"/>
</dbReference>
<dbReference type="GO" id="GO:0141197">
    <property type="term" value="F:4-hydroxy-3-methylbut-2-enyl-diphosphate synthase activity (flavodoxin)"/>
    <property type="evidence" value="ECO:0007669"/>
    <property type="project" value="UniProtKB-EC"/>
</dbReference>
<dbReference type="GO" id="GO:0005506">
    <property type="term" value="F:iron ion binding"/>
    <property type="evidence" value="ECO:0007669"/>
    <property type="project" value="InterPro"/>
</dbReference>
<dbReference type="GO" id="GO:0019288">
    <property type="term" value="P:isopentenyl diphosphate biosynthetic process, methylerythritol 4-phosphate pathway"/>
    <property type="evidence" value="ECO:0007669"/>
    <property type="project" value="UniProtKB-UniRule"/>
</dbReference>
<dbReference type="GO" id="GO:0016114">
    <property type="term" value="P:terpenoid biosynthetic process"/>
    <property type="evidence" value="ECO:0007669"/>
    <property type="project" value="InterPro"/>
</dbReference>
<dbReference type="FunFam" id="3.20.20.20:FF:000001">
    <property type="entry name" value="4-hydroxy-3-methylbut-2-en-1-yl diphosphate synthase (flavodoxin)"/>
    <property type="match status" value="1"/>
</dbReference>
<dbReference type="FunFam" id="3.30.413.10:FF:000012">
    <property type="entry name" value="4-hydroxy-3-methylbut-2-en-1-yl diphosphate synthase (flavodoxin)"/>
    <property type="match status" value="1"/>
</dbReference>
<dbReference type="Gene3D" id="3.20.20.20">
    <property type="entry name" value="Dihydropteroate synthase-like"/>
    <property type="match status" value="1"/>
</dbReference>
<dbReference type="Gene3D" id="3.30.413.10">
    <property type="entry name" value="Sulfite Reductase Hemoprotein, domain 1"/>
    <property type="match status" value="1"/>
</dbReference>
<dbReference type="HAMAP" id="MF_00159">
    <property type="entry name" value="IspG"/>
    <property type="match status" value="1"/>
</dbReference>
<dbReference type="InterPro" id="IPR011005">
    <property type="entry name" value="Dihydropteroate_synth-like_sf"/>
</dbReference>
<dbReference type="InterPro" id="IPR016425">
    <property type="entry name" value="IspG_bac"/>
</dbReference>
<dbReference type="InterPro" id="IPR004588">
    <property type="entry name" value="IspG_bac-typ"/>
</dbReference>
<dbReference type="InterPro" id="IPR045854">
    <property type="entry name" value="NO2/SO3_Rdtase_4Fe4S_sf"/>
</dbReference>
<dbReference type="NCBIfam" id="TIGR00612">
    <property type="entry name" value="ispG_gcpE"/>
    <property type="match status" value="1"/>
</dbReference>
<dbReference type="NCBIfam" id="NF001540">
    <property type="entry name" value="PRK00366.1"/>
    <property type="match status" value="1"/>
</dbReference>
<dbReference type="PANTHER" id="PTHR30454">
    <property type="entry name" value="4-HYDROXY-3-METHYLBUT-2-EN-1-YL DIPHOSPHATE SYNTHASE"/>
    <property type="match status" value="1"/>
</dbReference>
<dbReference type="PANTHER" id="PTHR30454:SF0">
    <property type="entry name" value="4-HYDROXY-3-METHYLBUT-2-EN-1-YL DIPHOSPHATE SYNTHASE (FERREDOXIN), CHLOROPLASTIC"/>
    <property type="match status" value="1"/>
</dbReference>
<dbReference type="Pfam" id="PF04551">
    <property type="entry name" value="GcpE"/>
    <property type="match status" value="1"/>
</dbReference>
<dbReference type="PIRSF" id="PIRSF004640">
    <property type="entry name" value="IspG"/>
    <property type="match status" value="1"/>
</dbReference>
<dbReference type="SUPFAM" id="SSF51717">
    <property type="entry name" value="Dihydropteroate synthetase-like"/>
    <property type="match status" value="1"/>
</dbReference>
<dbReference type="SUPFAM" id="SSF56014">
    <property type="entry name" value="Nitrite and sulphite reductase 4Fe-4S domain-like"/>
    <property type="match status" value="1"/>
</dbReference>
<comment type="function">
    <text evidence="1">Converts 2C-methyl-D-erythritol 2,4-cyclodiphosphate (ME-2,4cPP) into 1-hydroxy-2-methyl-2-(E)-butenyl 4-diphosphate.</text>
</comment>
<comment type="catalytic activity">
    <reaction evidence="1">
        <text>(2E)-4-hydroxy-3-methylbut-2-enyl diphosphate + oxidized [flavodoxin] + H2O + 2 H(+) = 2-C-methyl-D-erythritol 2,4-cyclic diphosphate + reduced [flavodoxin]</text>
        <dbReference type="Rhea" id="RHEA:43604"/>
        <dbReference type="Rhea" id="RHEA-COMP:10622"/>
        <dbReference type="Rhea" id="RHEA-COMP:10623"/>
        <dbReference type="ChEBI" id="CHEBI:15377"/>
        <dbReference type="ChEBI" id="CHEBI:15378"/>
        <dbReference type="ChEBI" id="CHEBI:57618"/>
        <dbReference type="ChEBI" id="CHEBI:58210"/>
        <dbReference type="ChEBI" id="CHEBI:58483"/>
        <dbReference type="ChEBI" id="CHEBI:128753"/>
        <dbReference type="EC" id="1.17.7.3"/>
    </reaction>
</comment>
<comment type="cofactor">
    <cofactor evidence="1">
        <name>[4Fe-4S] cluster</name>
        <dbReference type="ChEBI" id="CHEBI:49883"/>
    </cofactor>
    <text evidence="1">Binds 1 [4Fe-4S] cluster.</text>
</comment>
<comment type="pathway">
    <text evidence="1">Isoprenoid biosynthesis; isopentenyl diphosphate biosynthesis via DXP pathway; isopentenyl diphosphate from 1-deoxy-D-xylulose 5-phosphate: step 5/6.</text>
</comment>
<comment type="similarity">
    <text evidence="1">Belongs to the IspG family.</text>
</comment>
<accession>Q14IL6</accession>
<reference key="1">
    <citation type="journal article" date="2007" name="PLoS ONE">
        <title>Genome sequencing shows that European isolates of Francisella tularensis subspecies tularensis are almost identical to US laboratory strain Schu S4.</title>
        <authorList>
            <person name="Chaudhuri R.R."/>
            <person name="Ren C.-P."/>
            <person name="Desmond L."/>
            <person name="Vincent G.A."/>
            <person name="Silman N.J."/>
            <person name="Brehm J.K."/>
            <person name="Elmore M.J."/>
            <person name="Hudson M.J."/>
            <person name="Forsman M."/>
            <person name="Isherwood K.E."/>
            <person name="Gurycova D."/>
            <person name="Minton N.P."/>
            <person name="Titball R.W."/>
            <person name="Pallen M.J."/>
            <person name="Vipond R."/>
        </authorList>
    </citation>
    <scope>NUCLEOTIDE SEQUENCE [LARGE SCALE GENOMIC DNA]</scope>
    <source>
        <strain>FSC 198</strain>
    </source>
</reference>
<proteinExistence type="inferred from homology"/>
<sequence length="405" mass="43852">MGSYMNKTSVVKVGNVLIGGDNPVVVQSMTDTYTADVEKTVKQILALHKAGSEIVRITVNDESAAAAVPEIVKELAKHDCHVPLVGDFHYNGHTLLSKYPECAKALAKYRINPGNVGFGKKKDTQFAEIIKIAIANDKPVRIGVNWGSLDQALLARLIDENNAQENPLSLQQIMHKALITSALESAKYAEELGLAKDKIIISCKVSEVQDLIAVYQKLAKECGYALHLGLTEAGMGTKGIVASAVSLGILLQQGIGNTIRVSLTPAPNAPRTEEVRVCREILQNLGMRTFTPSVTSCPGCGRTTSSFFRELTSKVKDHLDEKMHTWKEQYHGVEAMKVAVMGCVVNGPGESKNADIGISLPGSGESPVAPVFIDGKKAHTLRGDNISEEFIEIVENYVKNRYGKK</sequence>
<protein>
    <recommendedName>
        <fullName evidence="1">4-hydroxy-3-methylbut-2-en-1-yl diphosphate synthase (flavodoxin)</fullName>
        <ecNumber evidence="1">1.17.7.3</ecNumber>
    </recommendedName>
    <alternativeName>
        <fullName evidence="1">1-hydroxy-2-methyl-2-(E)-butenyl 4-diphosphate synthase</fullName>
    </alternativeName>
</protein>
<gene>
    <name evidence="1" type="primary">ispG</name>
    <name type="ordered locus">FTF0607</name>
</gene>
<name>ISPG_FRAT1</name>
<evidence type="ECO:0000255" key="1">
    <source>
        <dbReference type="HAMAP-Rule" id="MF_00159"/>
    </source>
</evidence>
<keyword id="KW-0004">4Fe-4S</keyword>
<keyword id="KW-0408">Iron</keyword>
<keyword id="KW-0411">Iron-sulfur</keyword>
<keyword id="KW-0414">Isoprene biosynthesis</keyword>
<keyword id="KW-0479">Metal-binding</keyword>
<keyword id="KW-0560">Oxidoreductase</keyword>
<feature type="chain" id="PRO_1000011466" description="4-hydroxy-3-methylbut-2-en-1-yl diphosphate synthase (flavodoxin)">
    <location>
        <begin position="1"/>
        <end position="405"/>
    </location>
</feature>
<feature type="binding site" evidence="1">
    <location>
        <position position="297"/>
    </location>
    <ligand>
        <name>[4Fe-4S] cluster</name>
        <dbReference type="ChEBI" id="CHEBI:49883"/>
    </ligand>
</feature>
<feature type="binding site" evidence="1">
    <location>
        <position position="300"/>
    </location>
    <ligand>
        <name>[4Fe-4S] cluster</name>
        <dbReference type="ChEBI" id="CHEBI:49883"/>
    </ligand>
</feature>
<feature type="binding site" evidence="1">
    <location>
        <position position="343"/>
    </location>
    <ligand>
        <name>[4Fe-4S] cluster</name>
        <dbReference type="ChEBI" id="CHEBI:49883"/>
    </ligand>
</feature>
<feature type="binding site" evidence="1">
    <location>
        <position position="350"/>
    </location>
    <ligand>
        <name>[4Fe-4S] cluster</name>
        <dbReference type="ChEBI" id="CHEBI:49883"/>
    </ligand>
</feature>